<dbReference type="EC" id="7.1.1.-" evidence="1"/>
<dbReference type="EMBL" id="CP000744">
    <property type="protein sequence ID" value="ABR81273.1"/>
    <property type="molecule type" value="Genomic_DNA"/>
</dbReference>
<dbReference type="RefSeq" id="WP_003090467.1">
    <property type="nucleotide sequence ID" value="NC_009656.1"/>
</dbReference>
<dbReference type="SMR" id="A6V4E1"/>
<dbReference type="GeneID" id="77220819"/>
<dbReference type="KEGG" id="pap:PSPA7_2562"/>
<dbReference type="HOGENOM" id="CLU_067218_4_3_6"/>
<dbReference type="Proteomes" id="UP000001582">
    <property type="component" value="Chromosome"/>
</dbReference>
<dbReference type="GO" id="GO:0005886">
    <property type="term" value="C:plasma membrane"/>
    <property type="evidence" value="ECO:0007669"/>
    <property type="project" value="UniProtKB-SubCell"/>
</dbReference>
<dbReference type="GO" id="GO:0051539">
    <property type="term" value="F:4 iron, 4 sulfur cluster binding"/>
    <property type="evidence" value="ECO:0007669"/>
    <property type="project" value="UniProtKB-KW"/>
</dbReference>
<dbReference type="GO" id="GO:0005506">
    <property type="term" value="F:iron ion binding"/>
    <property type="evidence" value="ECO:0007669"/>
    <property type="project" value="UniProtKB-UniRule"/>
</dbReference>
<dbReference type="GO" id="GO:0050136">
    <property type="term" value="F:NADH:ubiquinone reductase (non-electrogenic) activity"/>
    <property type="evidence" value="ECO:0007669"/>
    <property type="project" value="UniProtKB-UniRule"/>
</dbReference>
<dbReference type="GO" id="GO:0048038">
    <property type="term" value="F:quinone binding"/>
    <property type="evidence" value="ECO:0007669"/>
    <property type="project" value="UniProtKB-KW"/>
</dbReference>
<dbReference type="GO" id="GO:0009060">
    <property type="term" value="P:aerobic respiration"/>
    <property type="evidence" value="ECO:0007669"/>
    <property type="project" value="TreeGrafter"/>
</dbReference>
<dbReference type="FunFam" id="3.30.70.3270:FF:000002">
    <property type="entry name" value="NADH-quinone oxidoreductase subunit I"/>
    <property type="match status" value="1"/>
</dbReference>
<dbReference type="Gene3D" id="3.30.70.3270">
    <property type="match status" value="1"/>
</dbReference>
<dbReference type="HAMAP" id="MF_01351">
    <property type="entry name" value="NDH1_NuoI"/>
    <property type="match status" value="1"/>
</dbReference>
<dbReference type="InterPro" id="IPR017896">
    <property type="entry name" value="4Fe4S_Fe-S-bd"/>
</dbReference>
<dbReference type="InterPro" id="IPR017900">
    <property type="entry name" value="4Fe4S_Fe_S_CS"/>
</dbReference>
<dbReference type="InterPro" id="IPR010226">
    <property type="entry name" value="NADH_quinone_OxRdtase_chainI"/>
</dbReference>
<dbReference type="NCBIfam" id="TIGR01971">
    <property type="entry name" value="NuoI"/>
    <property type="match status" value="1"/>
</dbReference>
<dbReference type="NCBIfam" id="NF004536">
    <property type="entry name" value="PRK05888.1-1"/>
    <property type="match status" value="1"/>
</dbReference>
<dbReference type="PANTHER" id="PTHR10849:SF20">
    <property type="entry name" value="NADH DEHYDROGENASE [UBIQUINONE] IRON-SULFUR PROTEIN 8, MITOCHONDRIAL"/>
    <property type="match status" value="1"/>
</dbReference>
<dbReference type="PANTHER" id="PTHR10849">
    <property type="entry name" value="NADH DEHYDROGENASE UBIQUINONE IRON-SULFUR PROTEIN 8, MITOCHONDRIAL"/>
    <property type="match status" value="1"/>
</dbReference>
<dbReference type="Pfam" id="PF12838">
    <property type="entry name" value="Fer4_7"/>
    <property type="match status" value="1"/>
</dbReference>
<dbReference type="SUPFAM" id="SSF54862">
    <property type="entry name" value="4Fe-4S ferredoxins"/>
    <property type="match status" value="1"/>
</dbReference>
<dbReference type="PROSITE" id="PS00198">
    <property type="entry name" value="4FE4S_FER_1"/>
    <property type="match status" value="2"/>
</dbReference>
<dbReference type="PROSITE" id="PS51379">
    <property type="entry name" value="4FE4S_FER_2"/>
    <property type="match status" value="2"/>
</dbReference>
<keyword id="KW-0004">4Fe-4S</keyword>
<keyword id="KW-0997">Cell inner membrane</keyword>
<keyword id="KW-1003">Cell membrane</keyword>
<keyword id="KW-0408">Iron</keyword>
<keyword id="KW-0411">Iron-sulfur</keyword>
<keyword id="KW-0472">Membrane</keyword>
<keyword id="KW-0479">Metal-binding</keyword>
<keyword id="KW-0520">NAD</keyword>
<keyword id="KW-0874">Quinone</keyword>
<keyword id="KW-0677">Repeat</keyword>
<keyword id="KW-1278">Translocase</keyword>
<keyword id="KW-0830">Ubiquinone</keyword>
<comment type="function">
    <text evidence="1">NDH-1 shuttles electrons from NADH, via FMN and iron-sulfur (Fe-S) centers, to quinones in the respiratory chain. The immediate electron acceptor for the enzyme in this species is believed to be ubiquinone. Couples the redox reaction to proton translocation (for every two electrons transferred, four hydrogen ions are translocated across the cytoplasmic membrane), and thus conserves the redox energy in a proton gradient.</text>
</comment>
<comment type="catalytic activity">
    <reaction evidence="1">
        <text>a quinone + NADH + 5 H(+)(in) = a quinol + NAD(+) + 4 H(+)(out)</text>
        <dbReference type="Rhea" id="RHEA:57888"/>
        <dbReference type="ChEBI" id="CHEBI:15378"/>
        <dbReference type="ChEBI" id="CHEBI:24646"/>
        <dbReference type="ChEBI" id="CHEBI:57540"/>
        <dbReference type="ChEBI" id="CHEBI:57945"/>
        <dbReference type="ChEBI" id="CHEBI:132124"/>
    </reaction>
</comment>
<comment type="cofactor">
    <cofactor evidence="1">
        <name>[4Fe-4S] cluster</name>
        <dbReference type="ChEBI" id="CHEBI:49883"/>
    </cofactor>
    <text evidence="1">Binds 2 [4Fe-4S] clusters per subunit.</text>
</comment>
<comment type="subunit">
    <text evidence="1">NDH-1 is composed of 13 different subunits. Subunits NuoA, H, J, K, L, M, N constitute the membrane sector of the complex.</text>
</comment>
<comment type="subcellular location">
    <subcellularLocation>
        <location evidence="1">Cell inner membrane</location>
        <topology evidence="1">Peripheral membrane protein</topology>
    </subcellularLocation>
</comment>
<comment type="similarity">
    <text evidence="1">Belongs to the complex I 23 kDa subunit family.</text>
</comment>
<accession>A6V4E1</accession>
<proteinExistence type="inferred from homology"/>
<name>NUOI_PSEP7</name>
<protein>
    <recommendedName>
        <fullName evidence="1">NADH-quinone oxidoreductase subunit I</fullName>
        <ecNumber evidence="1">7.1.1.-</ecNumber>
    </recommendedName>
    <alternativeName>
        <fullName evidence="1">NADH dehydrogenase I subunit I</fullName>
    </alternativeName>
    <alternativeName>
        <fullName evidence="1">NDH-1 subunit I</fullName>
    </alternativeName>
</protein>
<gene>
    <name evidence="1" type="primary">nuoI</name>
    <name type="ordered locus">PSPA7_2562</name>
</gene>
<evidence type="ECO:0000255" key="1">
    <source>
        <dbReference type="HAMAP-Rule" id="MF_01351"/>
    </source>
</evidence>
<sequence>MIKEIINVVHGTFTQLRSLVMIFGHAFRKRDTLQYPEEPVYLPPRYRGRIVLTRDPDGEERCVACNLCAVACPVGCISLQKAETEDGRWYPEFFRINFSRCIFCGLCEEACPTTAIQLTPDFEMGEFKRQDLVYEKHDLLISGPGKNPDYNYYRVAGMAIAGKPKGAAQNEAEPINVKSLLP</sequence>
<organism>
    <name type="scientific">Pseudomonas paraeruginosa (strain DSM 24068 / PA7)</name>
    <name type="common">Pseudomonas aeruginosa (strain PA7)</name>
    <dbReference type="NCBI Taxonomy" id="381754"/>
    <lineage>
        <taxon>Bacteria</taxon>
        <taxon>Pseudomonadati</taxon>
        <taxon>Pseudomonadota</taxon>
        <taxon>Gammaproteobacteria</taxon>
        <taxon>Pseudomonadales</taxon>
        <taxon>Pseudomonadaceae</taxon>
        <taxon>Pseudomonas</taxon>
        <taxon>Pseudomonas paraeruginosa</taxon>
    </lineage>
</organism>
<feature type="chain" id="PRO_1000067772" description="NADH-quinone oxidoreductase subunit I">
    <location>
        <begin position="1"/>
        <end position="182"/>
    </location>
</feature>
<feature type="domain" description="4Fe-4S ferredoxin-type 1" evidence="1">
    <location>
        <begin position="52"/>
        <end position="82"/>
    </location>
</feature>
<feature type="domain" description="4Fe-4S ferredoxin-type 2" evidence="1">
    <location>
        <begin position="92"/>
        <end position="121"/>
    </location>
</feature>
<feature type="binding site" evidence="1">
    <location>
        <position position="62"/>
    </location>
    <ligand>
        <name>[4Fe-4S] cluster</name>
        <dbReference type="ChEBI" id="CHEBI:49883"/>
        <label>1</label>
    </ligand>
</feature>
<feature type="binding site" evidence="1">
    <location>
        <position position="65"/>
    </location>
    <ligand>
        <name>[4Fe-4S] cluster</name>
        <dbReference type="ChEBI" id="CHEBI:49883"/>
        <label>1</label>
    </ligand>
</feature>
<feature type="binding site" evidence="1">
    <location>
        <position position="68"/>
    </location>
    <ligand>
        <name>[4Fe-4S] cluster</name>
        <dbReference type="ChEBI" id="CHEBI:49883"/>
        <label>1</label>
    </ligand>
</feature>
<feature type="binding site" evidence="1">
    <location>
        <position position="72"/>
    </location>
    <ligand>
        <name>[4Fe-4S] cluster</name>
        <dbReference type="ChEBI" id="CHEBI:49883"/>
        <label>2</label>
    </ligand>
</feature>
<feature type="binding site" evidence="1">
    <location>
        <position position="101"/>
    </location>
    <ligand>
        <name>[4Fe-4S] cluster</name>
        <dbReference type="ChEBI" id="CHEBI:49883"/>
        <label>2</label>
    </ligand>
</feature>
<feature type="binding site" evidence="1">
    <location>
        <position position="104"/>
    </location>
    <ligand>
        <name>[4Fe-4S] cluster</name>
        <dbReference type="ChEBI" id="CHEBI:49883"/>
        <label>2</label>
    </ligand>
</feature>
<feature type="binding site" evidence="1">
    <location>
        <position position="107"/>
    </location>
    <ligand>
        <name>[4Fe-4S] cluster</name>
        <dbReference type="ChEBI" id="CHEBI:49883"/>
        <label>2</label>
    </ligand>
</feature>
<feature type="binding site" evidence="1">
    <location>
        <position position="111"/>
    </location>
    <ligand>
        <name>[4Fe-4S] cluster</name>
        <dbReference type="ChEBI" id="CHEBI:49883"/>
        <label>1</label>
    </ligand>
</feature>
<reference key="1">
    <citation type="submission" date="2007-06" db="EMBL/GenBank/DDBJ databases">
        <authorList>
            <person name="Dodson R.J."/>
            <person name="Harkins D."/>
            <person name="Paulsen I.T."/>
        </authorList>
    </citation>
    <scope>NUCLEOTIDE SEQUENCE [LARGE SCALE GENOMIC DNA]</scope>
    <source>
        <strain>DSM 24068 / PA7</strain>
    </source>
</reference>